<evidence type="ECO:0000250" key="1"/>
<evidence type="ECO:0000256" key="2">
    <source>
        <dbReference type="SAM" id="MobiDB-lite"/>
    </source>
</evidence>
<evidence type="ECO:0000305" key="3"/>
<sequence length="248" mass="28390">MKNTLKLPLLIGVAGGTSCGKSTIVERIIENLNANAKQSGRQIDIVHLSLHSFYRELSAEEKILAREGKFNFDHPDQINFDLLAETLQNMIDGKTVEIPKYDMITSSMNGTVTVEPAKVIIIEGILLLYDERVRKLLSTKLFVEKNAESRLRNRLATYIRDYHRAPLSIIRQYTEFVKPAFEEFCRPTKKYADVIIPRGADNHVATDLIAKNLQETFRKIVVSSDEEEEKENELVKQGSFRRPFSRPH</sequence>
<feature type="chain" id="PRO_0000164459" description="Probable uridine-cytidine kinase">
    <location>
        <begin position="1"/>
        <end position="248"/>
    </location>
</feature>
<feature type="region of interest" description="Disordered" evidence="2">
    <location>
        <begin position="224"/>
        <end position="248"/>
    </location>
</feature>
<feature type="binding site" evidence="1">
    <location>
        <begin position="15"/>
        <end position="23"/>
    </location>
    <ligand>
        <name>ATP</name>
        <dbReference type="ChEBI" id="CHEBI:30616"/>
    </ligand>
</feature>
<feature type="binding site" evidence="1">
    <location>
        <position position="73"/>
    </location>
    <ligand>
        <name>substrate</name>
    </ligand>
</feature>
<feature type="binding site" evidence="1">
    <location>
        <position position="101"/>
    </location>
    <ligand>
        <name>substrate</name>
    </ligand>
</feature>
<feature type="binding site" evidence="1">
    <location>
        <position position="154"/>
    </location>
    <ligand>
        <name>substrate</name>
    </ligand>
</feature>
<feature type="binding site" evidence="1">
    <location>
        <position position="164"/>
    </location>
    <ligand>
        <name>substrate</name>
    </ligand>
</feature>
<feature type="binding site" evidence="1">
    <location>
        <position position="172"/>
    </location>
    <ligand>
        <name>substrate</name>
    </ligand>
</feature>
<feature type="binding site" evidence="1">
    <location>
        <position position="201"/>
    </location>
    <ligand>
        <name>ATP</name>
        <dbReference type="ChEBI" id="CHEBI:30616"/>
    </ligand>
</feature>
<accession>Q17413</accession>
<proteinExistence type="inferred from homology"/>
<name>UCK_CAEEL</name>
<organism>
    <name type="scientific">Caenorhabditis elegans</name>
    <dbReference type="NCBI Taxonomy" id="6239"/>
    <lineage>
        <taxon>Eukaryota</taxon>
        <taxon>Metazoa</taxon>
        <taxon>Ecdysozoa</taxon>
        <taxon>Nematoda</taxon>
        <taxon>Chromadorea</taxon>
        <taxon>Rhabditida</taxon>
        <taxon>Rhabditina</taxon>
        <taxon>Rhabditomorpha</taxon>
        <taxon>Rhabditoidea</taxon>
        <taxon>Rhabditidae</taxon>
        <taxon>Peloderinae</taxon>
        <taxon>Caenorhabditis</taxon>
    </lineage>
</organism>
<comment type="catalytic activity">
    <reaction>
        <text>uridine + ATP = UMP + ADP + H(+)</text>
        <dbReference type="Rhea" id="RHEA:16825"/>
        <dbReference type="ChEBI" id="CHEBI:15378"/>
        <dbReference type="ChEBI" id="CHEBI:16704"/>
        <dbReference type="ChEBI" id="CHEBI:30616"/>
        <dbReference type="ChEBI" id="CHEBI:57865"/>
        <dbReference type="ChEBI" id="CHEBI:456216"/>
        <dbReference type="EC" id="2.7.1.48"/>
    </reaction>
</comment>
<comment type="catalytic activity">
    <reaction>
        <text>cytidine + ATP = CMP + ADP + H(+)</text>
        <dbReference type="Rhea" id="RHEA:24674"/>
        <dbReference type="ChEBI" id="CHEBI:15378"/>
        <dbReference type="ChEBI" id="CHEBI:17562"/>
        <dbReference type="ChEBI" id="CHEBI:30616"/>
        <dbReference type="ChEBI" id="CHEBI:60377"/>
        <dbReference type="ChEBI" id="CHEBI:456216"/>
        <dbReference type="EC" id="2.7.1.48"/>
    </reaction>
</comment>
<comment type="pathway">
    <text>Pyrimidine metabolism; CTP biosynthesis via salvage pathway; CTP from cytidine: step 1/3.</text>
</comment>
<comment type="pathway">
    <text>Pyrimidine metabolism; UMP biosynthesis via salvage pathway; UMP from uridine: step 1/1.</text>
</comment>
<comment type="similarity">
    <text evidence="3">Belongs to the uridine kinase family.</text>
</comment>
<protein>
    <recommendedName>
        <fullName>Probable uridine-cytidine kinase</fullName>
        <shortName>UCK</shortName>
        <ecNumber>2.7.1.48</ecNumber>
    </recommendedName>
    <alternativeName>
        <fullName>Cytidine monophosphokinase</fullName>
    </alternativeName>
    <alternativeName>
        <fullName>Uridine monophosphokinase</fullName>
    </alternativeName>
</protein>
<dbReference type="EC" id="2.7.1.48"/>
<dbReference type="EMBL" id="Z69634">
    <property type="protein sequence ID" value="CAA93453.2"/>
    <property type="molecule type" value="Genomic_DNA"/>
</dbReference>
<dbReference type="PIR" id="T18629">
    <property type="entry name" value="T18629"/>
</dbReference>
<dbReference type="RefSeq" id="NP_502304.2">
    <property type="nucleotide sequence ID" value="NM_069903.6"/>
</dbReference>
<dbReference type="SMR" id="Q17413"/>
<dbReference type="BioGRID" id="43253">
    <property type="interactions" value="4"/>
</dbReference>
<dbReference type="FunCoup" id="Q17413">
    <property type="interactions" value="1454"/>
</dbReference>
<dbReference type="IntAct" id="Q17413">
    <property type="interactions" value="1"/>
</dbReference>
<dbReference type="STRING" id="6239.B0001.4a.1"/>
<dbReference type="iPTMnet" id="Q17413"/>
<dbReference type="PaxDb" id="6239-B0001.4"/>
<dbReference type="PeptideAtlas" id="Q17413"/>
<dbReference type="EnsemblMetazoa" id="B0001.4a.1">
    <property type="protein sequence ID" value="B0001.4a.1"/>
    <property type="gene ID" value="WBGene00007089"/>
</dbReference>
<dbReference type="GeneID" id="178160"/>
<dbReference type="KEGG" id="cel:CELE_B0001.4"/>
<dbReference type="UCSC" id="B0001.4">
    <property type="organism name" value="c. elegans"/>
</dbReference>
<dbReference type="AGR" id="WB:WBGene00007089"/>
<dbReference type="CTD" id="178160"/>
<dbReference type="WormBase" id="B0001.4a">
    <property type="protein sequence ID" value="CE37307"/>
    <property type="gene ID" value="WBGene00007089"/>
</dbReference>
<dbReference type="eggNOG" id="KOG4203">
    <property type="taxonomic scope" value="Eukaryota"/>
</dbReference>
<dbReference type="GeneTree" id="ENSGT01020000230412"/>
<dbReference type="HOGENOM" id="CLU_021278_1_1_1"/>
<dbReference type="InParanoid" id="Q17413"/>
<dbReference type="OMA" id="TVKPMHE"/>
<dbReference type="OrthoDB" id="10257085at2759"/>
<dbReference type="PhylomeDB" id="Q17413"/>
<dbReference type="Reactome" id="R-CEL-73614">
    <property type="pathway name" value="Pyrimidine salvage"/>
</dbReference>
<dbReference type="UniPathway" id="UPA00574">
    <property type="reaction ID" value="UER00637"/>
</dbReference>
<dbReference type="UniPathway" id="UPA00579">
    <property type="reaction ID" value="UER00640"/>
</dbReference>
<dbReference type="PRO" id="PR:Q17413"/>
<dbReference type="Proteomes" id="UP000001940">
    <property type="component" value="Chromosome IV"/>
</dbReference>
<dbReference type="Bgee" id="WBGene00007089">
    <property type="expression patterns" value="Expressed in pharyngeal muscle cell (C elegans) and 4 other cell types or tissues"/>
</dbReference>
<dbReference type="ExpressionAtlas" id="Q17413">
    <property type="expression patterns" value="baseline and differential"/>
</dbReference>
<dbReference type="GO" id="GO:0005737">
    <property type="term" value="C:cytoplasm"/>
    <property type="evidence" value="ECO:0000318"/>
    <property type="project" value="GO_Central"/>
</dbReference>
<dbReference type="GO" id="GO:0005524">
    <property type="term" value="F:ATP binding"/>
    <property type="evidence" value="ECO:0007669"/>
    <property type="project" value="UniProtKB-KW"/>
</dbReference>
<dbReference type="GO" id="GO:0043771">
    <property type="term" value="F:cytidine kinase activity"/>
    <property type="evidence" value="ECO:0007669"/>
    <property type="project" value="RHEA"/>
</dbReference>
<dbReference type="GO" id="GO:0004849">
    <property type="term" value="F:uridine kinase activity"/>
    <property type="evidence" value="ECO:0000318"/>
    <property type="project" value="GO_Central"/>
</dbReference>
<dbReference type="GO" id="GO:0044211">
    <property type="term" value="P:CTP salvage"/>
    <property type="evidence" value="ECO:0007669"/>
    <property type="project" value="UniProtKB-UniPathway"/>
</dbReference>
<dbReference type="GO" id="GO:0044206">
    <property type="term" value="P:UMP salvage"/>
    <property type="evidence" value="ECO:0007669"/>
    <property type="project" value="UniProtKB-UniPathway"/>
</dbReference>
<dbReference type="CDD" id="cd02023">
    <property type="entry name" value="UMPK"/>
    <property type="match status" value="1"/>
</dbReference>
<dbReference type="FunFam" id="3.40.50.300:FF:003577">
    <property type="entry name" value="Probable uridine-cytidine kinase"/>
    <property type="match status" value="1"/>
</dbReference>
<dbReference type="Gene3D" id="3.40.50.300">
    <property type="entry name" value="P-loop containing nucleotide triphosphate hydrolases"/>
    <property type="match status" value="1"/>
</dbReference>
<dbReference type="InterPro" id="IPR027417">
    <property type="entry name" value="P-loop_NTPase"/>
</dbReference>
<dbReference type="InterPro" id="IPR006083">
    <property type="entry name" value="PRK/URK"/>
</dbReference>
<dbReference type="InterPro" id="IPR000764">
    <property type="entry name" value="Uridine_kinase-like"/>
</dbReference>
<dbReference type="NCBIfam" id="NF004018">
    <property type="entry name" value="PRK05480.1"/>
    <property type="match status" value="1"/>
</dbReference>
<dbReference type="PANTHER" id="PTHR10285">
    <property type="entry name" value="URIDINE KINASE"/>
    <property type="match status" value="1"/>
</dbReference>
<dbReference type="Pfam" id="PF00485">
    <property type="entry name" value="PRK"/>
    <property type="match status" value="1"/>
</dbReference>
<dbReference type="PRINTS" id="PR00988">
    <property type="entry name" value="URIDINKINASE"/>
</dbReference>
<dbReference type="SUPFAM" id="SSF52540">
    <property type="entry name" value="P-loop containing nucleoside triphosphate hydrolases"/>
    <property type="match status" value="1"/>
</dbReference>
<keyword id="KW-0067">ATP-binding</keyword>
<keyword id="KW-0418">Kinase</keyword>
<keyword id="KW-0547">Nucleotide-binding</keyword>
<keyword id="KW-1185">Reference proteome</keyword>
<keyword id="KW-0808">Transferase</keyword>
<reference key="1">
    <citation type="journal article" date="1998" name="Science">
        <title>Genome sequence of the nematode C. elegans: a platform for investigating biology.</title>
        <authorList>
            <consortium name="The C. elegans sequencing consortium"/>
        </authorList>
    </citation>
    <scope>NUCLEOTIDE SEQUENCE [LARGE SCALE GENOMIC DNA]</scope>
    <source>
        <strain>Bristol N2</strain>
    </source>
</reference>
<gene>
    <name type="ORF">B0001.4</name>
</gene>